<proteinExistence type="inferred from homology"/>
<reference key="1">
    <citation type="submission" date="2008-10" db="EMBL/GenBank/DDBJ databases">
        <title>Genome sequence of Bacillus cereus G9842.</title>
        <authorList>
            <person name="Dodson R.J."/>
            <person name="Durkin A.S."/>
            <person name="Rosovitz M.J."/>
            <person name="Rasko D.A."/>
            <person name="Hoffmaster A."/>
            <person name="Ravel J."/>
            <person name="Sutton G."/>
        </authorList>
    </citation>
    <scope>NUCLEOTIDE SEQUENCE [LARGE SCALE GENOMIC DNA]</scope>
    <source>
        <strain>G9842</strain>
    </source>
</reference>
<name>Y4136_BACC2</name>
<keyword id="KW-1003">Cell membrane</keyword>
<keyword id="KW-0472">Membrane</keyword>
<keyword id="KW-0812">Transmembrane</keyword>
<keyword id="KW-1133">Transmembrane helix</keyword>
<accession>B7IL96</accession>
<sequence>MVHMHITAWALGLILFFVAYSLYSAGRKGKGVHMGLRLMYIIIIVTGFMLYMSIVKTATGSMHMWYGLKMLTGILVIGGMEMVLVKMSKNKPTGAVWGLFIVALVAVFYLGLKLPIGWKVF</sequence>
<dbReference type="EMBL" id="CP001186">
    <property type="protein sequence ID" value="ACK97303.1"/>
    <property type="molecule type" value="Genomic_DNA"/>
</dbReference>
<dbReference type="RefSeq" id="WP_000233496.1">
    <property type="nucleotide sequence ID" value="NC_011772.1"/>
</dbReference>
<dbReference type="KEGG" id="bcg:BCG9842_B4136"/>
<dbReference type="HOGENOM" id="CLU_146641_1_1_9"/>
<dbReference type="Proteomes" id="UP000006744">
    <property type="component" value="Chromosome"/>
</dbReference>
<dbReference type="GO" id="GO:0005886">
    <property type="term" value="C:plasma membrane"/>
    <property type="evidence" value="ECO:0007669"/>
    <property type="project" value="UniProtKB-SubCell"/>
</dbReference>
<dbReference type="HAMAP" id="MF_01536">
    <property type="entry name" value="UPF0344"/>
    <property type="match status" value="1"/>
</dbReference>
<dbReference type="InterPro" id="IPR010899">
    <property type="entry name" value="UPF0344"/>
</dbReference>
<dbReference type="NCBIfam" id="NF010194">
    <property type="entry name" value="PRK13673.1-1"/>
    <property type="match status" value="1"/>
</dbReference>
<dbReference type="Pfam" id="PF07457">
    <property type="entry name" value="DUF1516"/>
    <property type="match status" value="1"/>
</dbReference>
<organism>
    <name type="scientific">Bacillus cereus (strain G9842)</name>
    <dbReference type="NCBI Taxonomy" id="405531"/>
    <lineage>
        <taxon>Bacteria</taxon>
        <taxon>Bacillati</taxon>
        <taxon>Bacillota</taxon>
        <taxon>Bacilli</taxon>
        <taxon>Bacillales</taxon>
        <taxon>Bacillaceae</taxon>
        <taxon>Bacillus</taxon>
        <taxon>Bacillus cereus group</taxon>
    </lineage>
</organism>
<gene>
    <name type="ordered locus">BCG9842_B4136</name>
</gene>
<comment type="subcellular location">
    <subcellularLocation>
        <location evidence="1">Cell membrane</location>
        <topology evidence="1">Multi-pass membrane protein</topology>
    </subcellularLocation>
</comment>
<comment type="similarity">
    <text evidence="1">Belongs to the UPF0344 family.</text>
</comment>
<feature type="chain" id="PRO_1000198641" description="UPF0344 protein BCG9842_B4136">
    <location>
        <begin position="1"/>
        <end position="121"/>
    </location>
</feature>
<feature type="transmembrane region" description="Helical" evidence="1">
    <location>
        <begin position="6"/>
        <end position="26"/>
    </location>
</feature>
<feature type="transmembrane region" description="Helical" evidence="1">
    <location>
        <begin position="38"/>
        <end position="58"/>
    </location>
</feature>
<feature type="transmembrane region" description="Helical" evidence="1">
    <location>
        <begin position="65"/>
        <end position="85"/>
    </location>
</feature>
<feature type="transmembrane region" description="Helical" evidence="1">
    <location>
        <begin position="92"/>
        <end position="112"/>
    </location>
</feature>
<evidence type="ECO:0000255" key="1">
    <source>
        <dbReference type="HAMAP-Rule" id="MF_01536"/>
    </source>
</evidence>
<protein>
    <recommendedName>
        <fullName evidence="1">UPF0344 protein BCG9842_B4136</fullName>
    </recommendedName>
</protein>